<organism>
    <name type="scientific">Myxoma virus (strain Uriarra)</name>
    <name type="common">MYXV</name>
    <dbReference type="NCBI Taxonomy" id="265876"/>
    <lineage>
        <taxon>Viruses</taxon>
        <taxon>Varidnaviria</taxon>
        <taxon>Bamfordvirae</taxon>
        <taxon>Nucleocytoviricota</taxon>
        <taxon>Pokkesviricetes</taxon>
        <taxon>Chitovirales</taxon>
        <taxon>Poxviridae</taxon>
        <taxon>Chordopoxvirinae</taxon>
        <taxon>Leporipoxvirus</taxon>
        <taxon>Myxoma virus</taxon>
    </lineage>
</organism>
<sequence length="333" mass="38046">MELFKHFLQSTASDVFVSPVSISAVLAVLLEGAKGRTAAQLRLALEPRYSHLDKVTVASRVYGDWRLDIKPKFMQAVRDRFELVNFNHSPEKIKDDINRWVAARTNNKILNAVNSISPDTKLLIVAAIYFEVAWRNQFVPDFTIEGEFWVTKDVSKTVRMMTLSDDFRFVDVRNEGIKMIELPYEYGYSMLVIIPDDLEQVERHLSLMKVISWLKMSTLRYVHLSFPKFKMETSYTLNEALATSGVTDIFAHPNFEDMTDDKNVAVSDIFHKAYIEVTEFGTTAASCTYGCVTDFGGTMDPVVLKVNKPFIFIIKHDDTFSLLFLGRVTSPNY</sequence>
<evidence type="ECO:0000250" key="1"/>
<evidence type="ECO:0000305" key="2"/>
<organismHost>
    <name type="scientific">Oryctolagus cuniculus</name>
    <name type="common">Rabbit</name>
    <dbReference type="NCBI Taxonomy" id="9986"/>
</organismHost>
<proteinExistence type="inferred from homology"/>
<dbReference type="EMBL" id="AF244938">
    <property type="protein sequence ID" value="AAF72167.1"/>
    <property type="molecule type" value="Genomic_DNA"/>
</dbReference>
<dbReference type="RefSeq" id="NP_051864.1">
    <property type="nucleotide sequence ID" value="NC_001132.2"/>
</dbReference>
<dbReference type="SMR" id="P68566"/>
<dbReference type="MEROPS" id="I04.077"/>
<dbReference type="GeneID" id="932102"/>
<dbReference type="KEGG" id="vg:932102"/>
<dbReference type="GO" id="GO:0005615">
    <property type="term" value="C:extracellular space"/>
    <property type="evidence" value="ECO:0007669"/>
    <property type="project" value="InterPro"/>
</dbReference>
<dbReference type="GO" id="GO:0030430">
    <property type="term" value="C:host cell cytoplasm"/>
    <property type="evidence" value="ECO:0007669"/>
    <property type="project" value="UniProtKB-SubCell"/>
</dbReference>
<dbReference type="GO" id="GO:0004867">
    <property type="term" value="F:serine-type endopeptidase inhibitor activity"/>
    <property type="evidence" value="ECO:0007669"/>
    <property type="project" value="UniProtKB-KW"/>
</dbReference>
<dbReference type="GO" id="GO:0033668">
    <property type="term" value="P:symbiont-mediated suppression of host apoptosis"/>
    <property type="evidence" value="ECO:0007669"/>
    <property type="project" value="UniProtKB-KW"/>
</dbReference>
<dbReference type="CDD" id="cd00172">
    <property type="entry name" value="serpin"/>
    <property type="match status" value="1"/>
</dbReference>
<dbReference type="Gene3D" id="2.30.39.10">
    <property type="entry name" value="Alpha-1-antitrypsin, domain 1"/>
    <property type="match status" value="1"/>
</dbReference>
<dbReference type="Gene3D" id="3.30.497.10">
    <property type="entry name" value="Antithrombin, subunit I, domain 2"/>
    <property type="match status" value="1"/>
</dbReference>
<dbReference type="InterPro" id="IPR023795">
    <property type="entry name" value="Serpin_CS"/>
</dbReference>
<dbReference type="InterPro" id="IPR023796">
    <property type="entry name" value="Serpin_dom"/>
</dbReference>
<dbReference type="InterPro" id="IPR000215">
    <property type="entry name" value="Serpin_fam"/>
</dbReference>
<dbReference type="InterPro" id="IPR036186">
    <property type="entry name" value="Serpin_sf"/>
</dbReference>
<dbReference type="InterPro" id="IPR042178">
    <property type="entry name" value="Serpin_sf_1"/>
</dbReference>
<dbReference type="InterPro" id="IPR042185">
    <property type="entry name" value="Serpin_sf_2"/>
</dbReference>
<dbReference type="PANTHER" id="PTHR11461:SF211">
    <property type="entry name" value="GH10112P-RELATED"/>
    <property type="match status" value="1"/>
</dbReference>
<dbReference type="PANTHER" id="PTHR11461">
    <property type="entry name" value="SERINE PROTEASE INHIBITOR, SERPIN"/>
    <property type="match status" value="1"/>
</dbReference>
<dbReference type="Pfam" id="PF00079">
    <property type="entry name" value="Serpin"/>
    <property type="match status" value="1"/>
</dbReference>
<dbReference type="SMART" id="SM00093">
    <property type="entry name" value="SERPIN"/>
    <property type="match status" value="1"/>
</dbReference>
<dbReference type="SUPFAM" id="SSF56574">
    <property type="entry name" value="Serpins"/>
    <property type="match status" value="1"/>
</dbReference>
<dbReference type="PROSITE" id="PS00284">
    <property type="entry name" value="SERPIN"/>
    <property type="match status" value="1"/>
</dbReference>
<accession>P68566</accession>
<accession>Q9WPF7</accession>
<protein>
    <recommendedName>
        <fullName>Serine proteinase inhibitor 2</fullName>
        <shortName>Serp-2</shortName>
        <shortName>Serpin-2</shortName>
    </recommendedName>
</protein>
<keyword id="KW-1035">Host cytoplasm</keyword>
<keyword id="KW-0945">Host-virus interaction</keyword>
<keyword id="KW-1085">Inhibition of host caspases by virus</keyword>
<keyword id="KW-1119">Modulation of host cell apoptosis by virus</keyword>
<keyword id="KW-0646">Protease inhibitor</keyword>
<keyword id="KW-0722">Serine protease inhibitor</keyword>
<gene>
    <name type="primary">SERP2</name>
    <name type="synonym">SPI-2</name>
    <name type="ORF">M151R</name>
</gene>
<reference key="1">
    <citation type="submission" date="2000-03" db="EMBL/GenBank/DDBJ databases">
        <title>Coevolution of host and virus: cellular localization of virus in myxoma virus infection of resistant and susceptible European rabbits.</title>
        <authorList>
            <person name="Best S.M."/>
            <person name="Collins S.V."/>
            <person name="Kerr P.J."/>
        </authorList>
    </citation>
    <scope>NUCLEOTIDE SEQUENCE [GENOMIC DNA]</scope>
</reference>
<feature type="chain" id="PRO_0000094148" description="Serine proteinase inhibitor 2">
    <location>
        <begin position="1"/>
        <end position="333"/>
    </location>
</feature>
<feature type="site" description="Reactive bond" evidence="1">
    <location>
        <begin position="294"/>
        <end position="295"/>
    </location>
</feature>
<comment type="function">
    <text>Weak inhibitor of the interleukin-1-beta converting enzyme (ICE) and of granzyme B. Does not form a stable complex with ICE, but can for a stable complex with granzyme B.</text>
</comment>
<comment type="subcellular location">
    <subcellularLocation>
        <location evidence="2">Host cytoplasm</location>
    </subcellularLocation>
</comment>
<comment type="similarity">
    <text evidence="2">Belongs to the serpin family. Poxviruses subfamily.</text>
</comment>
<name>SPI2_MYXVU</name>